<feature type="signal peptide">
    <location>
        <begin position="1"/>
        <end position="23"/>
    </location>
</feature>
<feature type="chain" id="PRO_0000036423" description="Variant surface glycoprotein ILTAT 1.24">
    <location>
        <begin position="24"/>
        <end position="491"/>
    </location>
</feature>
<feature type="propeptide" id="PRO_0000036424" description="Removed in mature form" evidence="1">
    <location>
        <begin position="492"/>
        <end position="514"/>
    </location>
</feature>
<feature type="region of interest" description="Disordered" evidence="3">
    <location>
        <begin position="451"/>
        <end position="476"/>
    </location>
</feature>
<feature type="compositionally biased region" description="Low complexity" evidence="3">
    <location>
        <begin position="455"/>
        <end position="464"/>
    </location>
</feature>
<feature type="compositionally biased region" description="Basic and acidic residues" evidence="3">
    <location>
        <begin position="465"/>
        <end position="476"/>
    </location>
</feature>
<feature type="lipid moiety-binding region" description="GPI-anchor amidated aspartate" evidence="1">
    <location>
        <position position="491"/>
    </location>
</feature>
<feature type="glycosylation site" description="N-linked (GlcNAc...) asparagine" evidence="2">
    <location>
        <position position="443"/>
    </location>
</feature>
<feature type="disulfide bond">
    <location>
        <begin position="37"/>
        <end position="162"/>
    </location>
</feature>
<feature type="disulfide bond">
    <location>
        <begin position="143"/>
        <end position="204"/>
    </location>
</feature>
<feature type="helix" evidence="6">
    <location>
        <begin position="30"/>
        <end position="43"/>
    </location>
</feature>
<feature type="helix" evidence="6">
    <location>
        <begin position="46"/>
        <end position="77"/>
    </location>
</feature>
<feature type="helix" evidence="6">
    <location>
        <begin position="82"/>
        <end position="135"/>
    </location>
</feature>
<feature type="strand" evidence="6">
    <location>
        <begin position="139"/>
        <end position="144"/>
    </location>
</feature>
<feature type="strand" evidence="6">
    <location>
        <begin position="147"/>
        <end position="149"/>
    </location>
</feature>
<feature type="turn" evidence="6">
    <location>
        <begin position="154"/>
        <end position="157"/>
    </location>
</feature>
<feature type="helix" evidence="6">
    <location>
        <begin position="158"/>
        <end position="160"/>
    </location>
</feature>
<feature type="turn" evidence="6">
    <location>
        <begin position="178"/>
        <end position="180"/>
    </location>
</feature>
<feature type="strand" evidence="6">
    <location>
        <begin position="183"/>
        <end position="185"/>
    </location>
</feature>
<feature type="helix" evidence="6">
    <location>
        <begin position="195"/>
        <end position="197"/>
    </location>
</feature>
<feature type="strand" evidence="6">
    <location>
        <begin position="201"/>
        <end position="203"/>
    </location>
</feature>
<feature type="strand" evidence="6">
    <location>
        <begin position="206"/>
        <end position="208"/>
    </location>
</feature>
<feature type="turn" evidence="6">
    <location>
        <begin position="214"/>
        <end position="216"/>
    </location>
</feature>
<feature type="strand" evidence="6">
    <location>
        <begin position="217"/>
        <end position="219"/>
    </location>
</feature>
<feature type="strand" evidence="6">
    <location>
        <begin position="228"/>
        <end position="230"/>
    </location>
</feature>
<feature type="helix" evidence="6">
    <location>
        <begin position="231"/>
        <end position="233"/>
    </location>
</feature>
<feature type="strand" evidence="6">
    <location>
        <begin position="235"/>
        <end position="239"/>
    </location>
</feature>
<feature type="strand" evidence="6">
    <location>
        <begin position="242"/>
        <end position="245"/>
    </location>
</feature>
<feature type="turn" evidence="6">
    <location>
        <begin position="251"/>
        <end position="255"/>
    </location>
</feature>
<feature type="helix" evidence="6">
    <location>
        <begin position="256"/>
        <end position="258"/>
    </location>
</feature>
<feature type="helix" evidence="6">
    <location>
        <begin position="262"/>
        <end position="274"/>
    </location>
</feature>
<feature type="helix" evidence="6">
    <location>
        <begin position="286"/>
        <end position="294"/>
    </location>
</feature>
<feature type="helix" evidence="6">
    <location>
        <begin position="297"/>
        <end position="310"/>
    </location>
</feature>
<feature type="helix" evidence="6">
    <location>
        <begin position="315"/>
        <end position="317"/>
    </location>
</feature>
<feature type="helix" evidence="6">
    <location>
        <begin position="321"/>
        <end position="328"/>
    </location>
</feature>
<feature type="helix" evidence="6">
    <location>
        <begin position="335"/>
        <end position="343"/>
    </location>
</feature>
<feature type="strand" evidence="6">
    <location>
        <begin position="347"/>
        <end position="349"/>
    </location>
</feature>
<feature type="strand" evidence="6">
    <location>
        <begin position="352"/>
        <end position="354"/>
    </location>
</feature>
<feature type="strand" evidence="6">
    <location>
        <begin position="359"/>
        <end position="361"/>
    </location>
</feature>
<feature type="helix" evidence="6">
    <location>
        <begin position="362"/>
        <end position="364"/>
    </location>
</feature>
<feature type="helix" evidence="6">
    <location>
        <begin position="368"/>
        <end position="380"/>
    </location>
</feature>
<feature type="helix" evidence="4">
    <location>
        <begin position="408"/>
        <end position="413"/>
    </location>
</feature>
<feature type="helix" evidence="4">
    <location>
        <begin position="418"/>
        <end position="423"/>
    </location>
</feature>
<feature type="strand" evidence="4">
    <location>
        <begin position="427"/>
        <end position="429"/>
    </location>
</feature>
<feature type="strand" evidence="4">
    <location>
        <begin position="439"/>
        <end position="442"/>
    </location>
</feature>
<feature type="helix" evidence="4">
    <location>
        <begin position="444"/>
        <end position="446"/>
    </location>
</feature>
<feature type="turn" evidence="5">
    <location>
        <begin position="460"/>
        <end position="463"/>
    </location>
</feature>
<feature type="turn" evidence="5">
    <location>
        <begin position="467"/>
        <end position="471"/>
    </location>
</feature>
<feature type="turn" evidence="5">
    <location>
        <begin position="474"/>
        <end position="476"/>
    </location>
</feature>
<feature type="turn" evidence="5">
    <location>
        <begin position="479"/>
        <end position="481"/>
    </location>
</feature>
<feature type="strand" evidence="5">
    <location>
        <begin position="482"/>
        <end position="484"/>
    </location>
</feature>
<reference key="1">
    <citation type="journal article" date="1991" name="J. Mol. Biol.">
        <title>Variant specific glycoprotein of Trypanosoma brucei consists of two domains each having an independently conserved pattern of cysteine residues.</title>
        <authorList>
            <person name="Carrington M."/>
            <person name="Miller N."/>
            <person name="Blum M.L."/>
            <person name="Roditi I."/>
            <person name="Wiley D.C."/>
            <person name="Turner M.J."/>
        </authorList>
    </citation>
    <scope>NUCLEOTIDE SEQUENCE [MRNA]</scope>
    <source>
        <strain>Isolate MIAG 209</strain>
    </source>
</reference>
<reference key="2">
    <citation type="journal article" date="1993" name="Nature">
        <title>A structural motif in the variant surface glycoproteins of Trypanosoma brucei.</title>
        <authorList>
            <person name="Blum M.L."/>
            <person name="Down J.A."/>
            <person name="Gurnett A.M."/>
            <person name="Carrington M."/>
            <person name="Turner M.J."/>
            <person name="Wiley D.C."/>
        </authorList>
    </citation>
    <scope>X-RAY CRYSTALLOGRAPHY (2.7 ANGSTROMS) OF 24-381</scope>
</reference>
<sequence>MVYRNILQLSVLKVLLIVLIVEATHFGVKYELWQPECELTAELRKTAGVAKMKVNSDLNSFKTLELTKMKLLTFAAKFPESKEALTLRALEAALNTDLRALRDNIANGIDRAVRATAYASEAAGALFSGIQTLHDATDGTTYCLSASGQGSNGNAAMASQGCKPLALPELLTEDSYNTDVISDKGFPKISPLTNAQGQGKSGECGLFQAASGAQATNTGVQFSGGSRINLGLGAIVASAAQQPTRPDLSDFSGTARNQADTLYGKAHASITELLQLAQGPKPGQTEVETMKLLAQKTAALDSIKFQLAASTGKKTSDYKEDENLKTEYFGKTESNIEALWNKVKEEKVKGADPEDPSKESKISDLNTEEQLQRVLDYYAVATMLKLAKQAEDIAKLETEIADQRGKSPEAECNKITEEPKCSEEKICSWHKEVKAGEKNCQFNSTKASKSGVPVTQTQTAGADTTAEKCKGKGEKDCKSPDCKWEGGTCKDSSILANKQFALSVASAAFVALLF</sequence>
<organism>
    <name type="scientific">Trypanosoma brucei brucei</name>
    <dbReference type="NCBI Taxonomy" id="5702"/>
    <lineage>
        <taxon>Eukaryota</taxon>
        <taxon>Discoba</taxon>
        <taxon>Euglenozoa</taxon>
        <taxon>Kinetoplastea</taxon>
        <taxon>Metakinetoplastina</taxon>
        <taxon>Trypanosomatida</taxon>
        <taxon>Trypanosomatidae</taxon>
        <taxon>Trypanosoma</taxon>
    </lineage>
</organism>
<keyword id="KW-0002">3D-structure</keyword>
<keyword id="KW-1003">Cell membrane</keyword>
<keyword id="KW-1015">Disulfide bond</keyword>
<keyword id="KW-0325">Glycoprotein</keyword>
<keyword id="KW-0336">GPI-anchor</keyword>
<keyword id="KW-0449">Lipoprotein</keyword>
<keyword id="KW-0472">Membrane</keyword>
<keyword id="KW-0732">Signal</keyword>
<keyword id="KW-0821">Trypanosomiasis</keyword>
<name>VSI4_TRYBB</name>
<proteinExistence type="evidence at protein level"/>
<accession>P26329</accession>
<protein>
    <recommendedName>
        <fullName>Variant surface glycoprotein ILTAT 1.24</fullName>
        <shortName>VSG</shortName>
    </recommendedName>
</protein>
<evidence type="ECO:0000250" key="1"/>
<evidence type="ECO:0000255" key="2"/>
<evidence type="ECO:0000256" key="3">
    <source>
        <dbReference type="SAM" id="MobiDB-lite"/>
    </source>
</evidence>
<evidence type="ECO:0007829" key="4">
    <source>
        <dbReference type="PDB" id="2JWG"/>
    </source>
</evidence>
<evidence type="ECO:0007829" key="5">
    <source>
        <dbReference type="PDB" id="2JWH"/>
    </source>
</evidence>
<evidence type="ECO:0007829" key="6">
    <source>
        <dbReference type="PDB" id="2VSG"/>
    </source>
</evidence>
<dbReference type="EMBL" id="X56767">
    <property type="protein sequence ID" value="CAA40086.1"/>
    <property type="molecule type" value="mRNA"/>
</dbReference>
<dbReference type="PIR" id="S18449">
    <property type="entry name" value="S18449"/>
</dbReference>
<dbReference type="PDB" id="2JWG">
    <property type="method" value="NMR"/>
    <property type="chains" value="A=405-450"/>
</dbReference>
<dbReference type="PDB" id="2JWH">
    <property type="method" value="NMR"/>
    <property type="chains" value="A=445-491"/>
</dbReference>
<dbReference type="PDB" id="2VSG">
    <property type="method" value="X-ray"/>
    <property type="resolution" value="2.70 A"/>
    <property type="chains" value="A/B=24-381"/>
</dbReference>
<dbReference type="PDBsum" id="2JWG"/>
<dbReference type="PDBsum" id="2JWH"/>
<dbReference type="PDBsum" id="2VSG"/>
<dbReference type="BMRB" id="P26329"/>
<dbReference type="SMR" id="P26329"/>
<dbReference type="EvolutionaryTrace" id="P26329"/>
<dbReference type="GO" id="GO:0005886">
    <property type="term" value="C:plasma membrane"/>
    <property type="evidence" value="ECO:0007669"/>
    <property type="project" value="UniProtKB-SubCell"/>
</dbReference>
<dbReference type="GO" id="GO:0098552">
    <property type="term" value="C:side of membrane"/>
    <property type="evidence" value="ECO:0007669"/>
    <property type="project" value="UniProtKB-KW"/>
</dbReference>
<dbReference type="GO" id="GO:0042783">
    <property type="term" value="P:symbiont-mediated evasion of host immune response"/>
    <property type="evidence" value="ECO:0007669"/>
    <property type="project" value="InterPro"/>
</dbReference>
<dbReference type="FunFam" id="3.30.1680.30:FF:000002">
    <property type="entry name" value="Variant surface glycoprotein (VSG, atypical), putative"/>
    <property type="match status" value="1"/>
</dbReference>
<dbReference type="FunFam" id="3.30.1680.40:FF:000001">
    <property type="entry name" value="Variant surface glycoprotein (VSG, atypical), putative"/>
    <property type="match status" value="1"/>
</dbReference>
<dbReference type="Gene3D" id="3.30.1680.30">
    <property type="match status" value="1"/>
</dbReference>
<dbReference type="Gene3D" id="3.30.1680.40">
    <property type="match status" value="1"/>
</dbReference>
<dbReference type="Gene3D" id="3.90.150.10">
    <property type="entry name" value="Variant Surface Glycoprotein, subunit A domain 1"/>
    <property type="match status" value="1"/>
</dbReference>
<dbReference type="Gene3D" id="1.10.470.10">
    <property type="entry name" value="Variant Surface Glycoprotein, subunit A, domain 2"/>
    <property type="match status" value="1"/>
</dbReference>
<dbReference type="InterPro" id="IPR001812">
    <property type="entry name" value="Trypano_VSG_A_N_dom"/>
</dbReference>
<dbReference type="InterPro" id="IPR019609">
    <property type="entry name" value="Variant_surf_glycoprt_trypan_C"/>
</dbReference>
<dbReference type="Pfam" id="PF00913">
    <property type="entry name" value="Trypan_glycop"/>
    <property type="match status" value="1"/>
</dbReference>
<dbReference type="Pfam" id="PF10659">
    <property type="entry name" value="Trypan_glycop_C"/>
    <property type="match status" value="1"/>
</dbReference>
<dbReference type="SUPFAM" id="SSF58087">
    <property type="entry name" value="Variant surface glycoprotein (N-terminal domain)"/>
    <property type="match status" value="1"/>
</dbReference>
<comment type="function">
    <text>VSG forms a coat on the surface of the parasite. The trypanosome evades the immune response of the host by expressing a series of antigenically distinct VSGs from an estimated 1000 VSG genes.</text>
</comment>
<comment type="subcellular location">
    <subcellularLocation>
        <location>Cell membrane</location>
        <topology>Lipid-anchor</topology>
        <topology>GPI-anchor</topology>
    </subcellularLocation>
    <text evidence="1">A soluble form is released from ruptured cells by the action of a PI-PLC.</text>
</comment>